<sequence length="289" mass="31184">MHKHNNGLKTAALFGVLWAVLLGLGAIIAAGTRSTTPIWIMALIGVATTAYGYWNSDKIAIRSMAAYPVTEAQAPQLYQIVRELSVRANKPMPRIYLSPTMTPNAFATGRNPKNAAVCCTEGILHLLDARELRGVLGHELMHVYNRDILTSSVVAAVAGVITSVGQMLLIFGSGDRRNANPLATIAMALLAPFAASLIQMAISRTREFDADEDGAELTGDPLALASALRKIESGVSQLPLPPDQRLVNASHLMIANPFRGGGIRRMFSTHPPMKERISRLERMAGRPLL</sequence>
<feature type="chain" id="PRO_1000020843" description="Protease HtpX homolog">
    <location>
        <begin position="1"/>
        <end position="289"/>
    </location>
</feature>
<feature type="transmembrane region" description="Helical" evidence="1">
    <location>
        <begin position="11"/>
        <end position="31"/>
    </location>
</feature>
<feature type="transmembrane region" description="Helical" evidence="1">
    <location>
        <begin position="34"/>
        <end position="54"/>
    </location>
</feature>
<feature type="transmembrane region" description="Helical" evidence="1">
    <location>
        <begin position="152"/>
        <end position="172"/>
    </location>
</feature>
<feature type="transmembrane region" description="Helical" evidence="1">
    <location>
        <begin position="182"/>
        <end position="202"/>
    </location>
</feature>
<feature type="active site" evidence="1">
    <location>
        <position position="139"/>
    </location>
</feature>
<feature type="binding site" evidence="1">
    <location>
        <position position="138"/>
    </location>
    <ligand>
        <name>Zn(2+)</name>
        <dbReference type="ChEBI" id="CHEBI:29105"/>
        <note>catalytic</note>
    </ligand>
</feature>
<feature type="binding site" evidence="1">
    <location>
        <position position="142"/>
    </location>
    <ligand>
        <name>Zn(2+)</name>
        <dbReference type="ChEBI" id="CHEBI:29105"/>
        <note>catalytic</note>
    </ligand>
</feature>
<feature type="binding site" evidence="1">
    <location>
        <position position="207"/>
    </location>
    <ligand>
        <name>Zn(2+)</name>
        <dbReference type="ChEBI" id="CHEBI:29105"/>
        <note>catalytic</note>
    </ligand>
</feature>
<reference key="1">
    <citation type="journal article" date="2006" name="PLoS Genet.">
        <title>Secrets of soil survival revealed by the genome sequence of Arthrobacter aurescens TC1.</title>
        <authorList>
            <person name="Mongodin E.F."/>
            <person name="Shapir N."/>
            <person name="Daugherty S.C."/>
            <person name="DeBoy R.T."/>
            <person name="Emerson J.B."/>
            <person name="Shvartzbeyn A."/>
            <person name="Radune D."/>
            <person name="Vamathevan J."/>
            <person name="Riggs F."/>
            <person name="Grinberg V."/>
            <person name="Khouri H.M."/>
            <person name="Wackett L.P."/>
            <person name="Nelson K.E."/>
            <person name="Sadowsky M.J."/>
        </authorList>
    </citation>
    <scope>NUCLEOTIDE SEQUENCE [LARGE SCALE GENOMIC DNA]</scope>
    <source>
        <strain>TC1</strain>
    </source>
</reference>
<proteinExistence type="inferred from homology"/>
<accession>A1R944</accession>
<evidence type="ECO:0000255" key="1">
    <source>
        <dbReference type="HAMAP-Rule" id="MF_00188"/>
    </source>
</evidence>
<protein>
    <recommendedName>
        <fullName evidence="1">Protease HtpX homolog</fullName>
        <ecNumber evidence="1">3.4.24.-</ecNumber>
    </recommendedName>
</protein>
<keyword id="KW-1003">Cell membrane</keyword>
<keyword id="KW-0378">Hydrolase</keyword>
<keyword id="KW-0472">Membrane</keyword>
<keyword id="KW-0479">Metal-binding</keyword>
<keyword id="KW-0482">Metalloprotease</keyword>
<keyword id="KW-0645">Protease</keyword>
<keyword id="KW-0812">Transmembrane</keyword>
<keyword id="KW-1133">Transmembrane helix</keyword>
<keyword id="KW-0862">Zinc</keyword>
<dbReference type="EC" id="3.4.24.-" evidence="1"/>
<dbReference type="EMBL" id="CP000474">
    <property type="protein sequence ID" value="ABM06605.1"/>
    <property type="molecule type" value="Genomic_DNA"/>
</dbReference>
<dbReference type="RefSeq" id="WP_011775691.1">
    <property type="nucleotide sequence ID" value="NC_008711.1"/>
</dbReference>
<dbReference type="STRING" id="290340.AAur_3055"/>
<dbReference type="KEGG" id="aau:AAur_3055"/>
<dbReference type="eggNOG" id="COG0501">
    <property type="taxonomic scope" value="Bacteria"/>
</dbReference>
<dbReference type="HOGENOM" id="CLU_042266_3_0_11"/>
<dbReference type="OrthoDB" id="15218at2"/>
<dbReference type="Proteomes" id="UP000000637">
    <property type="component" value="Chromosome"/>
</dbReference>
<dbReference type="GO" id="GO:0005886">
    <property type="term" value="C:plasma membrane"/>
    <property type="evidence" value="ECO:0007669"/>
    <property type="project" value="UniProtKB-SubCell"/>
</dbReference>
<dbReference type="GO" id="GO:0004222">
    <property type="term" value="F:metalloendopeptidase activity"/>
    <property type="evidence" value="ECO:0007669"/>
    <property type="project" value="UniProtKB-UniRule"/>
</dbReference>
<dbReference type="GO" id="GO:0008270">
    <property type="term" value="F:zinc ion binding"/>
    <property type="evidence" value="ECO:0007669"/>
    <property type="project" value="UniProtKB-UniRule"/>
</dbReference>
<dbReference type="GO" id="GO:0006508">
    <property type="term" value="P:proteolysis"/>
    <property type="evidence" value="ECO:0007669"/>
    <property type="project" value="UniProtKB-KW"/>
</dbReference>
<dbReference type="CDD" id="cd07336">
    <property type="entry name" value="M48B_HtpX_like"/>
    <property type="match status" value="1"/>
</dbReference>
<dbReference type="Gene3D" id="3.30.2010.10">
    <property type="entry name" value="Metalloproteases ('zincins'), catalytic domain"/>
    <property type="match status" value="1"/>
</dbReference>
<dbReference type="HAMAP" id="MF_00188">
    <property type="entry name" value="Pept_M48_protease_HtpX"/>
    <property type="match status" value="1"/>
</dbReference>
<dbReference type="InterPro" id="IPR050083">
    <property type="entry name" value="HtpX_protease"/>
</dbReference>
<dbReference type="InterPro" id="IPR022919">
    <property type="entry name" value="Pept_M48_protease_HtpX"/>
</dbReference>
<dbReference type="InterPro" id="IPR001915">
    <property type="entry name" value="Peptidase_M48"/>
</dbReference>
<dbReference type="NCBIfam" id="NF002839">
    <property type="entry name" value="PRK03072.1"/>
    <property type="match status" value="1"/>
</dbReference>
<dbReference type="PANTHER" id="PTHR43221">
    <property type="entry name" value="PROTEASE HTPX"/>
    <property type="match status" value="1"/>
</dbReference>
<dbReference type="PANTHER" id="PTHR43221:SF1">
    <property type="entry name" value="PROTEASE HTPX"/>
    <property type="match status" value="1"/>
</dbReference>
<dbReference type="Pfam" id="PF01435">
    <property type="entry name" value="Peptidase_M48"/>
    <property type="match status" value="1"/>
</dbReference>
<dbReference type="PROSITE" id="PS00142">
    <property type="entry name" value="ZINC_PROTEASE"/>
    <property type="match status" value="1"/>
</dbReference>
<organism>
    <name type="scientific">Paenarthrobacter aurescens (strain TC1)</name>
    <dbReference type="NCBI Taxonomy" id="290340"/>
    <lineage>
        <taxon>Bacteria</taxon>
        <taxon>Bacillati</taxon>
        <taxon>Actinomycetota</taxon>
        <taxon>Actinomycetes</taxon>
        <taxon>Micrococcales</taxon>
        <taxon>Micrococcaceae</taxon>
        <taxon>Paenarthrobacter</taxon>
    </lineage>
</organism>
<comment type="cofactor">
    <cofactor evidence="1">
        <name>Zn(2+)</name>
        <dbReference type="ChEBI" id="CHEBI:29105"/>
    </cofactor>
    <text evidence="1">Binds 1 zinc ion per subunit.</text>
</comment>
<comment type="subcellular location">
    <subcellularLocation>
        <location evidence="1">Cell membrane</location>
        <topology evidence="1">Multi-pass membrane protein</topology>
    </subcellularLocation>
</comment>
<comment type="similarity">
    <text evidence="1">Belongs to the peptidase M48B family.</text>
</comment>
<name>HTPX_PAEAT</name>
<gene>
    <name evidence="1" type="primary">htpX</name>
    <name type="ordered locus">AAur_3055</name>
</gene>